<sequence length="205" mass="23234">MSILAYNGGCVVAMRGKDCVAIATDHRFGIQAQTISTDFKKVFHIGPRMFLGLTGLQTDILTVRDRLMFRKNLYETRENREMCPKPFSAMMSSFLYEHRFGPYFIEPVVAGLDPKTMEPFICNMDLIGCPNAPDDFVVAGTCAEQLYGMCETLWKPDLEPDQLFEVIAQSIVNAFDRDAMSGWGATVYIIEKDKITERTLKTRMD</sequence>
<comment type="function">
    <text evidence="3">Non-catalytic component of the proteasome, a multicatalytic proteinase complex which is characterized by its ability to cleave peptides with Arg, Phe, Tyr, Leu, and Glu adjacent to the leaving group at neutral or slightly basic pH. The proteasome has an ATP-dependent proteolytic activity.</text>
</comment>
<comment type="subunit">
    <text evidence="1">The 26S proteasome consists of a 20S proteasome core and two 19S regulatory subunits. The 20S proteasome core is composed of 28 subunits that are arranged in four stacked rings, resulting in a barrel-shaped structure. The two end rings are each formed by seven alpha subunits, and the two central rings are each formed by seven beta subunits. The catalytic chamber with the active sites is on the inside of the barrel (By similarity).</text>
</comment>
<comment type="interaction">
    <interactant intactId="EBI-119764">
        <id>Q9XYN7</id>
    </interactant>
    <interactant intactId="EBI-183209">
        <id>P12881</id>
        <label>Prosalpha6</label>
    </interactant>
    <organismsDiffer>false</organismsDiffer>
    <experiments>3</experiments>
</comment>
<comment type="interaction">
    <interactant intactId="EBI-119764">
        <id>Q9XYN7</id>
    </interactant>
    <interactant intactId="EBI-192012">
        <id>Q9VUJ1</id>
        <label>Prosbeta2</label>
    </interactant>
    <organismsDiffer>false</organismsDiffer>
    <experiments>3</experiments>
</comment>
<comment type="interaction">
    <interactant intactId="EBI-119764">
        <id>Q9XYN7</id>
    </interactant>
    <interactant intactId="EBI-116800">
        <id>Q7K148</id>
        <label>Prosbeta5</label>
    </interactant>
    <organismsDiffer>false</organismsDiffer>
    <experiments>4</experiments>
</comment>
<comment type="subcellular location">
    <subcellularLocation>
        <location evidence="2">Cytoplasm</location>
    </subcellularLocation>
    <subcellularLocation>
        <location evidence="1">Nucleus</location>
    </subcellularLocation>
</comment>
<comment type="similarity">
    <text evidence="2">Belongs to the peptidase T1B family.</text>
</comment>
<feature type="chain" id="PRO_0000148062" description="Proteasome subunit beta type-3">
    <location>
        <begin position="1"/>
        <end position="205"/>
    </location>
</feature>
<name>PSB3_DROME</name>
<keyword id="KW-0963">Cytoplasm</keyword>
<keyword id="KW-0539">Nucleus</keyword>
<keyword id="KW-0647">Proteasome</keyword>
<keyword id="KW-1185">Reference proteome</keyword>
<reference key="1">
    <citation type="journal article" date="1999" name="Genetics">
        <title>The dominant temperature-sensitive lethal DTS7 of Drosophila melanogaster encodes an altered 20S proteasome beta-type subunit.</title>
        <authorList>
            <person name="Smyth K.A."/>
            <person name="Belote J.M."/>
        </authorList>
    </citation>
    <scope>NUCLEOTIDE SEQUENCE [GENOMIC DNA]</scope>
    <scope>FUNCTION</scope>
    <source>
        <strain>Samarkand</strain>
    </source>
</reference>
<reference key="2">
    <citation type="journal article" date="2006" name="Genetics">
        <title>Widespread adaptive evolution of Drosophila genes with sex-biased expression.</title>
        <authorList>
            <person name="Proeschel M."/>
            <person name="Zhang Z."/>
            <person name="Parsch J."/>
        </authorList>
    </citation>
    <scope>NUCLEOTIDE SEQUENCE [GENOMIC DNA]</scope>
    <source>
        <strain>ZBMEL131</strain>
        <strain>ZBMEL145</strain>
        <strain>ZBMEL157</strain>
        <strain>ZBMEL186</strain>
        <strain>ZBMEL191</strain>
        <strain>ZBMEL82</strain>
        <strain>ZBMEL84</strain>
        <strain>ZBMEL95</strain>
    </source>
</reference>
<reference key="3">
    <citation type="journal article" date="2000" name="Science">
        <title>The genome sequence of Drosophila melanogaster.</title>
        <authorList>
            <person name="Adams M.D."/>
            <person name="Celniker S.E."/>
            <person name="Holt R.A."/>
            <person name="Evans C.A."/>
            <person name="Gocayne J.D."/>
            <person name="Amanatides P.G."/>
            <person name="Scherer S.E."/>
            <person name="Li P.W."/>
            <person name="Hoskins R.A."/>
            <person name="Galle R.F."/>
            <person name="George R.A."/>
            <person name="Lewis S.E."/>
            <person name="Richards S."/>
            <person name="Ashburner M."/>
            <person name="Henderson S.N."/>
            <person name="Sutton G.G."/>
            <person name="Wortman J.R."/>
            <person name="Yandell M.D."/>
            <person name="Zhang Q."/>
            <person name="Chen L.X."/>
            <person name="Brandon R.C."/>
            <person name="Rogers Y.-H.C."/>
            <person name="Blazej R.G."/>
            <person name="Champe M."/>
            <person name="Pfeiffer B.D."/>
            <person name="Wan K.H."/>
            <person name="Doyle C."/>
            <person name="Baxter E.G."/>
            <person name="Helt G."/>
            <person name="Nelson C.R."/>
            <person name="Miklos G.L.G."/>
            <person name="Abril J.F."/>
            <person name="Agbayani A."/>
            <person name="An H.-J."/>
            <person name="Andrews-Pfannkoch C."/>
            <person name="Baldwin D."/>
            <person name="Ballew R.M."/>
            <person name="Basu A."/>
            <person name="Baxendale J."/>
            <person name="Bayraktaroglu L."/>
            <person name="Beasley E.M."/>
            <person name="Beeson K.Y."/>
            <person name="Benos P.V."/>
            <person name="Berman B.P."/>
            <person name="Bhandari D."/>
            <person name="Bolshakov S."/>
            <person name="Borkova D."/>
            <person name="Botchan M.R."/>
            <person name="Bouck J."/>
            <person name="Brokstein P."/>
            <person name="Brottier P."/>
            <person name="Burtis K.C."/>
            <person name="Busam D.A."/>
            <person name="Butler H."/>
            <person name="Cadieu E."/>
            <person name="Center A."/>
            <person name="Chandra I."/>
            <person name="Cherry J.M."/>
            <person name="Cawley S."/>
            <person name="Dahlke C."/>
            <person name="Davenport L.B."/>
            <person name="Davies P."/>
            <person name="de Pablos B."/>
            <person name="Delcher A."/>
            <person name="Deng Z."/>
            <person name="Mays A.D."/>
            <person name="Dew I."/>
            <person name="Dietz S.M."/>
            <person name="Dodson K."/>
            <person name="Doup L.E."/>
            <person name="Downes M."/>
            <person name="Dugan-Rocha S."/>
            <person name="Dunkov B.C."/>
            <person name="Dunn P."/>
            <person name="Durbin K.J."/>
            <person name="Evangelista C.C."/>
            <person name="Ferraz C."/>
            <person name="Ferriera S."/>
            <person name="Fleischmann W."/>
            <person name="Fosler C."/>
            <person name="Gabrielian A.E."/>
            <person name="Garg N.S."/>
            <person name="Gelbart W.M."/>
            <person name="Glasser K."/>
            <person name="Glodek A."/>
            <person name="Gong F."/>
            <person name="Gorrell J.H."/>
            <person name="Gu Z."/>
            <person name="Guan P."/>
            <person name="Harris M."/>
            <person name="Harris N.L."/>
            <person name="Harvey D.A."/>
            <person name="Heiman T.J."/>
            <person name="Hernandez J.R."/>
            <person name="Houck J."/>
            <person name="Hostin D."/>
            <person name="Houston K.A."/>
            <person name="Howland T.J."/>
            <person name="Wei M.-H."/>
            <person name="Ibegwam C."/>
            <person name="Jalali M."/>
            <person name="Kalush F."/>
            <person name="Karpen G.H."/>
            <person name="Ke Z."/>
            <person name="Kennison J.A."/>
            <person name="Ketchum K.A."/>
            <person name="Kimmel B.E."/>
            <person name="Kodira C.D."/>
            <person name="Kraft C.L."/>
            <person name="Kravitz S."/>
            <person name="Kulp D."/>
            <person name="Lai Z."/>
            <person name="Lasko P."/>
            <person name="Lei Y."/>
            <person name="Levitsky A.A."/>
            <person name="Li J.H."/>
            <person name="Li Z."/>
            <person name="Liang Y."/>
            <person name="Lin X."/>
            <person name="Liu X."/>
            <person name="Mattei B."/>
            <person name="McIntosh T.C."/>
            <person name="McLeod M.P."/>
            <person name="McPherson D."/>
            <person name="Merkulov G."/>
            <person name="Milshina N.V."/>
            <person name="Mobarry C."/>
            <person name="Morris J."/>
            <person name="Moshrefi A."/>
            <person name="Mount S.M."/>
            <person name="Moy M."/>
            <person name="Murphy B."/>
            <person name="Murphy L."/>
            <person name="Muzny D.M."/>
            <person name="Nelson D.L."/>
            <person name="Nelson D.R."/>
            <person name="Nelson K.A."/>
            <person name="Nixon K."/>
            <person name="Nusskern D.R."/>
            <person name="Pacleb J.M."/>
            <person name="Palazzolo M."/>
            <person name="Pittman G.S."/>
            <person name="Pan S."/>
            <person name="Pollard J."/>
            <person name="Puri V."/>
            <person name="Reese M.G."/>
            <person name="Reinert K."/>
            <person name="Remington K."/>
            <person name="Saunders R.D.C."/>
            <person name="Scheeler F."/>
            <person name="Shen H."/>
            <person name="Shue B.C."/>
            <person name="Siden-Kiamos I."/>
            <person name="Simpson M."/>
            <person name="Skupski M.P."/>
            <person name="Smith T.J."/>
            <person name="Spier E."/>
            <person name="Spradling A.C."/>
            <person name="Stapleton M."/>
            <person name="Strong R."/>
            <person name="Sun E."/>
            <person name="Svirskas R."/>
            <person name="Tector C."/>
            <person name="Turner R."/>
            <person name="Venter E."/>
            <person name="Wang A.H."/>
            <person name="Wang X."/>
            <person name="Wang Z.-Y."/>
            <person name="Wassarman D.A."/>
            <person name="Weinstock G.M."/>
            <person name="Weissenbach J."/>
            <person name="Williams S.M."/>
            <person name="Woodage T."/>
            <person name="Worley K.C."/>
            <person name="Wu D."/>
            <person name="Yang S."/>
            <person name="Yao Q.A."/>
            <person name="Ye J."/>
            <person name="Yeh R.-F."/>
            <person name="Zaveri J.S."/>
            <person name="Zhan M."/>
            <person name="Zhang G."/>
            <person name="Zhao Q."/>
            <person name="Zheng L."/>
            <person name="Zheng X.H."/>
            <person name="Zhong F.N."/>
            <person name="Zhong W."/>
            <person name="Zhou X."/>
            <person name="Zhu S.C."/>
            <person name="Zhu X."/>
            <person name="Smith H.O."/>
            <person name="Gibbs R.A."/>
            <person name="Myers E.W."/>
            <person name="Rubin G.M."/>
            <person name="Venter J.C."/>
        </authorList>
    </citation>
    <scope>NUCLEOTIDE SEQUENCE [LARGE SCALE GENOMIC DNA]</scope>
    <source>
        <strain>Berkeley</strain>
    </source>
</reference>
<reference key="4">
    <citation type="journal article" date="2002" name="Genome Biol.">
        <title>Annotation of the Drosophila melanogaster euchromatic genome: a systematic review.</title>
        <authorList>
            <person name="Misra S."/>
            <person name="Crosby M.A."/>
            <person name="Mungall C.J."/>
            <person name="Matthews B.B."/>
            <person name="Campbell K.S."/>
            <person name="Hradecky P."/>
            <person name="Huang Y."/>
            <person name="Kaminker J.S."/>
            <person name="Millburn G.H."/>
            <person name="Prochnik S.E."/>
            <person name="Smith C.D."/>
            <person name="Tupy J.L."/>
            <person name="Whitfield E.J."/>
            <person name="Bayraktaroglu L."/>
            <person name="Berman B.P."/>
            <person name="Bettencourt B.R."/>
            <person name="Celniker S.E."/>
            <person name="de Grey A.D.N.J."/>
            <person name="Drysdale R.A."/>
            <person name="Harris N.L."/>
            <person name="Richter J."/>
            <person name="Russo S."/>
            <person name="Schroeder A.J."/>
            <person name="Shu S.Q."/>
            <person name="Stapleton M."/>
            <person name="Yamada C."/>
            <person name="Ashburner M."/>
            <person name="Gelbart W.M."/>
            <person name="Rubin G.M."/>
            <person name="Lewis S.E."/>
        </authorList>
    </citation>
    <scope>GENOME REANNOTATION</scope>
    <source>
        <strain>Berkeley</strain>
    </source>
</reference>
<reference key="5">
    <citation type="journal article" date="2002" name="Genome Biol.">
        <title>A Drosophila full-length cDNA resource.</title>
        <authorList>
            <person name="Stapleton M."/>
            <person name="Carlson J.W."/>
            <person name="Brokstein P."/>
            <person name="Yu C."/>
            <person name="Champe M."/>
            <person name="George R.A."/>
            <person name="Guarin H."/>
            <person name="Kronmiller B."/>
            <person name="Pacleb J.M."/>
            <person name="Park S."/>
            <person name="Wan K.H."/>
            <person name="Rubin G.M."/>
            <person name="Celniker S.E."/>
        </authorList>
    </citation>
    <scope>NUCLEOTIDE SEQUENCE [LARGE SCALE MRNA]</scope>
    <source>
        <strain>Berkeley</strain>
        <tissue>Embryo</tissue>
    </source>
</reference>
<proteinExistence type="evidence at protein level"/>
<dbReference type="EMBL" id="AF116898">
    <property type="protein sequence ID" value="AAD22968.1"/>
    <property type="molecule type" value="Genomic_DNA"/>
</dbReference>
<dbReference type="EMBL" id="AM294562">
    <property type="protein sequence ID" value="CAL26545.1"/>
    <property type="molecule type" value="Genomic_DNA"/>
</dbReference>
<dbReference type="EMBL" id="AM294563">
    <property type="protein sequence ID" value="CAL26546.1"/>
    <property type="molecule type" value="Genomic_DNA"/>
</dbReference>
<dbReference type="EMBL" id="AM294564">
    <property type="protein sequence ID" value="CAL26547.1"/>
    <property type="molecule type" value="Genomic_DNA"/>
</dbReference>
<dbReference type="EMBL" id="AM294565">
    <property type="protein sequence ID" value="CAL26548.1"/>
    <property type="molecule type" value="Genomic_DNA"/>
</dbReference>
<dbReference type="EMBL" id="AM294566">
    <property type="protein sequence ID" value="CAL26549.1"/>
    <property type="molecule type" value="Genomic_DNA"/>
</dbReference>
<dbReference type="EMBL" id="AM294567">
    <property type="protein sequence ID" value="CAL26550.1"/>
    <property type="molecule type" value="Genomic_DNA"/>
</dbReference>
<dbReference type="EMBL" id="AM294568">
    <property type="protein sequence ID" value="CAL26551.1"/>
    <property type="molecule type" value="Genomic_DNA"/>
</dbReference>
<dbReference type="EMBL" id="AM294569">
    <property type="protein sequence ID" value="CAL26552.1"/>
    <property type="molecule type" value="Genomic_DNA"/>
</dbReference>
<dbReference type="EMBL" id="AE014297">
    <property type="protein sequence ID" value="AAF54320.1"/>
    <property type="molecule type" value="Genomic_DNA"/>
</dbReference>
<dbReference type="EMBL" id="AY095029">
    <property type="protein sequence ID" value="AAM11357.1"/>
    <property type="molecule type" value="mRNA"/>
</dbReference>
<dbReference type="RefSeq" id="NP_649858.1">
    <property type="nucleotide sequence ID" value="NM_141601.2"/>
</dbReference>
<dbReference type="SMR" id="Q9XYN7"/>
<dbReference type="BioGRID" id="66247">
    <property type="interactions" value="61"/>
</dbReference>
<dbReference type="ComplexPortal" id="CPX-9070">
    <property type="entry name" value="26S proteasome complex"/>
</dbReference>
<dbReference type="ComplexPortal" id="CPX-9087">
    <property type="entry name" value="26S proteasome complex, testis-specific variant"/>
</dbReference>
<dbReference type="DIP" id="DIP-18901N"/>
<dbReference type="FunCoup" id="Q9XYN7">
    <property type="interactions" value="1691"/>
</dbReference>
<dbReference type="IntAct" id="Q9XYN7">
    <property type="interactions" value="117"/>
</dbReference>
<dbReference type="STRING" id="7227.FBpp0081488"/>
<dbReference type="PaxDb" id="7227-FBpp0081488"/>
<dbReference type="DNASU" id="41079"/>
<dbReference type="EnsemblMetazoa" id="FBtr0082010">
    <property type="protein sequence ID" value="FBpp0081488"/>
    <property type="gene ID" value="FBgn0026380"/>
</dbReference>
<dbReference type="GeneID" id="41079"/>
<dbReference type="KEGG" id="dme:Dmel_CG11981"/>
<dbReference type="AGR" id="FB:FBgn0026380"/>
<dbReference type="CTD" id="41079"/>
<dbReference type="FlyBase" id="FBgn0026380">
    <property type="gene designation" value="Prosbeta3"/>
</dbReference>
<dbReference type="VEuPathDB" id="VectorBase:FBgn0026380"/>
<dbReference type="eggNOG" id="KOG0180">
    <property type="taxonomic scope" value="Eukaryota"/>
</dbReference>
<dbReference type="GeneTree" id="ENSGT00550000074820"/>
<dbReference type="HOGENOM" id="CLU_035750_10_0_1"/>
<dbReference type="InParanoid" id="Q9XYN7"/>
<dbReference type="OMA" id="CSEQLYG"/>
<dbReference type="OrthoDB" id="204949at2759"/>
<dbReference type="PhylomeDB" id="Q9XYN7"/>
<dbReference type="Reactome" id="R-DME-1169091">
    <property type="pathway name" value="Activation of NF-kappaB in B cells"/>
</dbReference>
<dbReference type="Reactome" id="R-DME-1234176">
    <property type="pathway name" value="Oxygen-dependent proline hydroxylation of Hypoxia-inducible Factor Alpha"/>
</dbReference>
<dbReference type="Reactome" id="R-DME-1236978">
    <property type="pathway name" value="Cross-presentation of soluble exogenous antigens (endosomes)"/>
</dbReference>
<dbReference type="Reactome" id="R-DME-174084">
    <property type="pathway name" value="Autodegradation of Cdh1 by Cdh1:APC/C"/>
</dbReference>
<dbReference type="Reactome" id="R-DME-174154">
    <property type="pathway name" value="APC/C:Cdc20 mediated degradation of Securin"/>
</dbReference>
<dbReference type="Reactome" id="R-DME-174178">
    <property type="pathway name" value="APC/C:Cdh1 mediated degradation of Cdc20 and other APC/C:Cdh1 targeted proteins in late mitosis/early G1"/>
</dbReference>
<dbReference type="Reactome" id="R-DME-174184">
    <property type="pathway name" value="Cdc20:Phospho-APC/C mediated degradation of Cyclin A"/>
</dbReference>
<dbReference type="Reactome" id="R-DME-187577">
    <property type="pathway name" value="SCF(Skp2)-mediated degradation of p27/p21"/>
</dbReference>
<dbReference type="Reactome" id="R-DME-195253">
    <property type="pathway name" value="Degradation of beta-catenin by the destruction complex"/>
</dbReference>
<dbReference type="Reactome" id="R-DME-202424">
    <property type="pathway name" value="Downstream TCR signaling"/>
</dbReference>
<dbReference type="Reactome" id="R-DME-209360">
    <property type="pathway name" value="Ubiquitination and proteolysis of phosphorylated CI"/>
</dbReference>
<dbReference type="Reactome" id="R-DME-209406">
    <property type="pathway name" value="Degradation of NF-kappa-B inhibitor, CACT"/>
</dbReference>
<dbReference type="Reactome" id="R-DME-209461">
    <property type="pathway name" value="Ubiquitination and degradation of phosphorylated ARM"/>
</dbReference>
<dbReference type="Reactome" id="R-DME-216167">
    <property type="pathway name" value="Nuclear CI is degraded"/>
</dbReference>
<dbReference type="Reactome" id="R-DME-2467813">
    <property type="pathway name" value="Separation of Sister Chromatids"/>
</dbReference>
<dbReference type="Reactome" id="R-DME-2871837">
    <property type="pathway name" value="FCERI mediated NF-kB activation"/>
</dbReference>
<dbReference type="Reactome" id="R-DME-350562">
    <property type="pathway name" value="Regulation of ornithine decarboxylase (ODC)"/>
</dbReference>
<dbReference type="Reactome" id="R-DME-382556">
    <property type="pathway name" value="ABC-family proteins mediated transport"/>
</dbReference>
<dbReference type="Reactome" id="R-DME-432395">
    <property type="pathway name" value="Degradation of TIM"/>
</dbReference>
<dbReference type="Reactome" id="R-DME-432524">
    <property type="pathway name" value="Degradation of PER"/>
</dbReference>
<dbReference type="Reactome" id="R-DME-432626">
    <property type="pathway name" value="Circadian Clock pathway"/>
</dbReference>
<dbReference type="Reactome" id="R-DME-450408">
    <property type="pathway name" value="AUF1 (hnRNP D0) binds and destabilizes mRNA"/>
</dbReference>
<dbReference type="Reactome" id="R-DME-4608870">
    <property type="pathway name" value="Asymmetric localization of PCP proteins"/>
</dbReference>
<dbReference type="Reactome" id="R-DME-4641257">
    <property type="pathway name" value="Degradation of AXIN"/>
</dbReference>
<dbReference type="Reactome" id="R-DME-4641258">
    <property type="pathway name" value="Degradation of DVL"/>
</dbReference>
<dbReference type="Reactome" id="R-DME-5358346">
    <property type="pathway name" value="Hedgehog ligand biogenesis"/>
</dbReference>
<dbReference type="Reactome" id="R-DME-538864">
    <property type="pathway name" value="Degradation of CRY"/>
</dbReference>
<dbReference type="Reactome" id="R-DME-5607761">
    <property type="pathway name" value="Dectin-1 mediated noncanonical NF-kB signaling"/>
</dbReference>
<dbReference type="Reactome" id="R-DME-5607764">
    <property type="pathway name" value="CLEC7A (Dectin-1) signaling"/>
</dbReference>
<dbReference type="Reactome" id="R-DME-5610780">
    <property type="pathway name" value="Degradation of GLI1 by the proteasome"/>
</dbReference>
<dbReference type="Reactome" id="R-DME-5610785">
    <property type="pathway name" value="GLI3 is processed to GLI3R by the proteasome"/>
</dbReference>
<dbReference type="Reactome" id="R-DME-5632684">
    <property type="pathway name" value="Hedgehog 'on' state"/>
</dbReference>
<dbReference type="Reactome" id="R-DME-5658442">
    <property type="pathway name" value="Regulation of RAS by GAPs"/>
</dbReference>
<dbReference type="Reactome" id="R-DME-5676590">
    <property type="pathway name" value="NIK--&gt;noncanonical NF-kB signaling"/>
</dbReference>
<dbReference type="Reactome" id="R-DME-5689603">
    <property type="pathway name" value="UCH proteinases"/>
</dbReference>
<dbReference type="Reactome" id="R-DME-5689880">
    <property type="pathway name" value="Ub-specific processing proteases"/>
</dbReference>
<dbReference type="Reactome" id="R-DME-68949">
    <property type="pathway name" value="Orc1 removal from chromatin"/>
</dbReference>
<dbReference type="Reactome" id="R-DME-69017">
    <property type="pathway name" value="CDK-mediated phosphorylation and removal of Cdc6"/>
</dbReference>
<dbReference type="Reactome" id="R-DME-69601">
    <property type="pathway name" value="Ubiquitin Mediated Degradation of Phosphorylated Cdc25A"/>
</dbReference>
<dbReference type="Reactome" id="R-DME-75815">
    <property type="pathway name" value="Ubiquitin-dependent degradation of Cyclin D"/>
</dbReference>
<dbReference type="Reactome" id="R-DME-8854050">
    <property type="pathway name" value="FBXL7 down-regulates AURKA during mitotic entry and in early mitosis"/>
</dbReference>
<dbReference type="Reactome" id="R-DME-8939236">
    <property type="pathway name" value="RUNX1 regulates transcription of genes involved in differentiation of HSCs"/>
</dbReference>
<dbReference type="Reactome" id="R-DME-8939902">
    <property type="pathway name" value="Regulation of RUNX2 expression and activity"/>
</dbReference>
<dbReference type="Reactome" id="R-DME-8941858">
    <property type="pathway name" value="Regulation of RUNX3 expression and activity"/>
</dbReference>
<dbReference type="Reactome" id="R-DME-8948751">
    <property type="pathway name" value="Regulation of PTEN stability and activity"/>
</dbReference>
<dbReference type="Reactome" id="R-DME-8951664">
    <property type="pathway name" value="Neddylation"/>
</dbReference>
<dbReference type="Reactome" id="R-DME-9020702">
    <property type="pathway name" value="Interleukin-1 signaling"/>
</dbReference>
<dbReference type="Reactome" id="R-DME-9755511">
    <property type="pathway name" value="KEAP1-NFE2L2 pathway"/>
</dbReference>
<dbReference type="Reactome" id="R-DME-9762114">
    <property type="pathway name" value="GSK3B and BTRC:CUL1-mediated-degradation of NFE2L2"/>
</dbReference>
<dbReference type="Reactome" id="R-DME-983168">
    <property type="pathway name" value="Antigen processing: Ubiquitination &amp; Proteasome degradation"/>
</dbReference>
<dbReference type="Reactome" id="R-DME-9907900">
    <property type="pathway name" value="Proteasome assembly"/>
</dbReference>
<dbReference type="BioGRID-ORCS" id="41079">
    <property type="hits" value="1 hit in 1 CRISPR screen"/>
</dbReference>
<dbReference type="GenomeRNAi" id="41079"/>
<dbReference type="PRO" id="PR:Q9XYN7"/>
<dbReference type="Proteomes" id="UP000000803">
    <property type="component" value="Chromosome 3R"/>
</dbReference>
<dbReference type="Bgee" id="FBgn0026380">
    <property type="expression patterns" value="Expressed in egg cell and 190 other cell types or tissues"/>
</dbReference>
<dbReference type="ExpressionAtlas" id="Q9XYN7">
    <property type="expression patterns" value="baseline and differential"/>
</dbReference>
<dbReference type="GO" id="GO:0005829">
    <property type="term" value="C:cytosol"/>
    <property type="evidence" value="ECO:0000318"/>
    <property type="project" value="GO_Central"/>
</dbReference>
<dbReference type="GO" id="GO:0005654">
    <property type="term" value="C:nucleoplasm"/>
    <property type="evidence" value="ECO:0000304"/>
    <property type="project" value="Reactome"/>
</dbReference>
<dbReference type="GO" id="GO:0005634">
    <property type="term" value="C:nucleus"/>
    <property type="evidence" value="ECO:0000318"/>
    <property type="project" value="GO_Central"/>
</dbReference>
<dbReference type="GO" id="GO:0000502">
    <property type="term" value="C:proteasome complex"/>
    <property type="evidence" value="ECO:0000314"/>
    <property type="project" value="FlyBase"/>
</dbReference>
<dbReference type="GO" id="GO:0005839">
    <property type="term" value="C:proteasome core complex"/>
    <property type="evidence" value="ECO:0000314"/>
    <property type="project" value="FlyBase"/>
</dbReference>
<dbReference type="GO" id="GO:0019774">
    <property type="term" value="C:proteasome core complex, beta-subunit complex"/>
    <property type="evidence" value="ECO:0000250"/>
    <property type="project" value="UniProtKB"/>
</dbReference>
<dbReference type="GO" id="GO:0043161">
    <property type="term" value="P:proteasome-mediated ubiquitin-dependent protein catabolic process"/>
    <property type="evidence" value="ECO:0000315"/>
    <property type="project" value="FlyBase"/>
</dbReference>
<dbReference type="CDD" id="cd03759">
    <property type="entry name" value="proteasome_beta_type_3"/>
    <property type="match status" value="1"/>
</dbReference>
<dbReference type="FunFam" id="3.60.20.10:FF:000003">
    <property type="entry name" value="Proteasome subunit beta type-3"/>
    <property type="match status" value="1"/>
</dbReference>
<dbReference type="Gene3D" id="3.60.20.10">
    <property type="entry name" value="Glutamine Phosphoribosylpyrophosphate, subunit 1, domain 1"/>
    <property type="match status" value="1"/>
</dbReference>
<dbReference type="InterPro" id="IPR029055">
    <property type="entry name" value="Ntn_hydrolases_N"/>
</dbReference>
<dbReference type="InterPro" id="IPR033811">
    <property type="entry name" value="Proteasome_beta_3"/>
</dbReference>
<dbReference type="InterPro" id="IPR016050">
    <property type="entry name" value="Proteasome_bsu_CS"/>
</dbReference>
<dbReference type="InterPro" id="IPR001353">
    <property type="entry name" value="Proteasome_sua/b"/>
</dbReference>
<dbReference type="InterPro" id="IPR023333">
    <property type="entry name" value="Proteasome_suB-type"/>
</dbReference>
<dbReference type="PANTHER" id="PTHR32194">
    <property type="entry name" value="METALLOPROTEASE TLDD"/>
    <property type="match status" value="1"/>
</dbReference>
<dbReference type="PANTHER" id="PTHR32194:SF10">
    <property type="entry name" value="PROTEASOME SUBUNIT BETA TYPE-3"/>
    <property type="match status" value="1"/>
</dbReference>
<dbReference type="Pfam" id="PF00227">
    <property type="entry name" value="Proteasome"/>
    <property type="match status" value="1"/>
</dbReference>
<dbReference type="SUPFAM" id="SSF56235">
    <property type="entry name" value="N-terminal nucleophile aminohydrolases (Ntn hydrolases)"/>
    <property type="match status" value="1"/>
</dbReference>
<dbReference type="PROSITE" id="PS00854">
    <property type="entry name" value="PROTEASOME_BETA_1"/>
    <property type="match status" value="1"/>
</dbReference>
<dbReference type="PROSITE" id="PS51476">
    <property type="entry name" value="PROTEASOME_BETA_2"/>
    <property type="match status" value="1"/>
</dbReference>
<organism>
    <name type="scientific">Drosophila melanogaster</name>
    <name type="common">Fruit fly</name>
    <dbReference type="NCBI Taxonomy" id="7227"/>
    <lineage>
        <taxon>Eukaryota</taxon>
        <taxon>Metazoa</taxon>
        <taxon>Ecdysozoa</taxon>
        <taxon>Arthropoda</taxon>
        <taxon>Hexapoda</taxon>
        <taxon>Insecta</taxon>
        <taxon>Pterygota</taxon>
        <taxon>Neoptera</taxon>
        <taxon>Endopterygota</taxon>
        <taxon>Diptera</taxon>
        <taxon>Brachycera</taxon>
        <taxon>Muscomorpha</taxon>
        <taxon>Ephydroidea</taxon>
        <taxon>Drosophilidae</taxon>
        <taxon>Drosophila</taxon>
        <taxon>Sophophora</taxon>
    </lineage>
</organism>
<evidence type="ECO:0000250" key="1"/>
<evidence type="ECO:0000255" key="2">
    <source>
        <dbReference type="PROSITE-ProRule" id="PRU00809"/>
    </source>
</evidence>
<evidence type="ECO:0000269" key="3">
    <source>
    </source>
</evidence>
<evidence type="ECO:0000312" key="4">
    <source>
        <dbReference type="FlyBase" id="FBgn0026380"/>
    </source>
</evidence>
<gene>
    <name evidence="4" type="primary">Prosbeta3</name>
    <name evidence="4" type="ORF">CG11981</name>
</gene>
<accession>Q9XYN7</accession>
<accession>A0APH4</accession>
<protein>
    <recommendedName>
        <fullName>Proteasome subunit beta type-3</fullName>
    </recommendedName>
    <alternativeName>
        <fullName>20S proteasome subunit beta-3</fullName>
    </alternativeName>
</protein>